<name>COQ8B_RAT</name>
<accession>Q6AY19</accession>
<proteinExistence type="evidence at protein level"/>
<reference key="1">
    <citation type="journal article" date="2004" name="Genome Res.">
        <title>The status, quality, and expansion of the NIH full-length cDNA project: the Mammalian Gene Collection (MGC).</title>
        <authorList>
            <consortium name="The MGC Project Team"/>
        </authorList>
    </citation>
    <scope>NUCLEOTIDE SEQUENCE [LARGE SCALE MRNA]</scope>
    <source>
        <tissue>Testis</tissue>
    </source>
</reference>
<reference key="2">
    <citation type="journal article" date="2013" name="J. Clin. Invest.">
        <title>ADCK4 mutations promote steroid-resistant nephrotic syndrome through CoQ10 biosynthesis disruption.</title>
        <authorList>
            <person name="Ashraf S."/>
            <person name="Gee H.Y."/>
            <person name="Woerner S."/>
            <person name="Xie L.X."/>
            <person name="Vega-Warner V."/>
            <person name="Lovric S."/>
            <person name="Fang H."/>
            <person name="Song X."/>
            <person name="Cattran D.C."/>
            <person name="Avila-Casado C."/>
            <person name="Paterson A.D."/>
            <person name="Nitschke P."/>
            <person name="Bole-Feysot C."/>
            <person name="Cochat P."/>
            <person name="Esteve-Rudd J."/>
            <person name="Haberberger B."/>
            <person name="Allen S.J."/>
            <person name="Zhou W."/>
            <person name="Airik R."/>
            <person name="Otto E.A."/>
            <person name="Barua M."/>
            <person name="Al-Hamed M.H."/>
            <person name="Kari J.A."/>
            <person name="Evans J."/>
            <person name="Bierzynska A."/>
            <person name="Saleem M.A."/>
            <person name="Bockenhauer D."/>
            <person name="Kleta R."/>
            <person name="El Desoky S."/>
            <person name="Hacihamdioglu D.O."/>
            <person name="Gok F."/>
            <person name="Washburn J."/>
            <person name="Wiggins R.C."/>
            <person name="Choi M."/>
            <person name="Lifton R.P."/>
            <person name="Levy S."/>
            <person name="Han Z."/>
            <person name="Salviati L."/>
            <person name="Prokisch H."/>
            <person name="Williams D.S."/>
            <person name="Pollak M."/>
            <person name="Clarke C.F."/>
            <person name="Pei Y."/>
            <person name="Antignac C."/>
            <person name="Hildebrandt F."/>
        </authorList>
    </citation>
    <scope>SUBCELLULAR LOCATION</scope>
    <scope>TISSUE SPECIFICITY</scope>
</reference>
<comment type="function">
    <text evidence="1 2">Atypical kinase involved in the biosynthesis of coenzyme Q, also named ubiquinone, an essential lipid-soluble electron transporter for aerobic cellular respiration. Its substrate specificity is still unclear: may act as a protein kinase that mediates phosphorylation of COQ3 (By similarity). According to other reports, acts as a small molecule kinase, possibly a lipid kinase that phosphorylates a prenyl lipid in the ubiquinone biosynthesis pathway, as suggested by its ability to bind coenzyme Q lipid intermediates (By similarity). However, the small molecule kinase activity was not confirmed by another publication. Required for podocyte migration (By similarity).</text>
</comment>
<comment type="pathway">
    <text evidence="2">Cofactor biosynthesis; ubiquinone biosynthesis.</text>
</comment>
<comment type="subunit">
    <text evidence="2">Homodimer; homodimerizes via its transmembrane region. Interacts with COQ6 and COQ7. Interacts with the multi-subunit COQ enzyme complex, composed of at least COQ3, COQ4, COQ5, COQ6, COQ7 and COQ9.</text>
</comment>
<comment type="subcellular location">
    <subcellularLocation>
        <location evidence="2">Mitochondrion membrane</location>
        <topology evidence="2">Single-pass membrane protein</topology>
    </subcellularLocation>
    <subcellularLocation>
        <location evidence="2">Cytoplasm</location>
        <location evidence="2">Cytosol</location>
    </subcellularLocation>
    <subcellularLocation>
        <location evidence="2">Cell membrane</location>
    </subcellularLocation>
</comment>
<comment type="tissue specificity">
    <text evidence="4">In the kidney, expressed in glomeruli, predominantly in podocyte foot precesses, as well as in proximal tubules and collecting ducts (at protein level).</text>
</comment>
<comment type="domain">
    <text evidence="1">Adopts an atypical protein kinase-like fold: while it adopts a core fold similar to that of well-characterized protein kinase-like domains. The KxGQ motif completely occludes the typical substrate binding pocket. Nucleotide-binding opens the substrate binding pocket and flips the active site from inside the hydrophobic core into a catalytically competent, solvent-exposed posture.</text>
</comment>
<comment type="similarity">
    <text evidence="5">Belongs to the protein kinase superfamily. ADCK protein kinase family.</text>
</comment>
<evidence type="ECO:0000250" key="1">
    <source>
        <dbReference type="UniProtKB" id="Q8NI60"/>
    </source>
</evidence>
<evidence type="ECO:0000250" key="2">
    <source>
        <dbReference type="UniProtKB" id="Q96D53"/>
    </source>
</evidence>
<evidence type="ECO:0000255" key="3"/>
<evidence type="ECO:0000269" key="4">
    <source>
    </source>
</evidence>
<evidence type="ECO:0000305" key="5"/>
<evidence type="ECO:0000312" key="6">
    <source>
        <dbReference type="RGD" id="1311356"/>
    </source>
</evidence>
<dbReference type="EC" id="2.7.-.-" evidence="1"/>
<dbReference type="EMBL" id="BC079227">
    <property type="protein sequence ID" value="AAH79227.1"/>
    <property type="molecule type" value="mRNA"/>
</dbReference>
<dbReference type="RefSeq" id="NP_001012065.1">
    <property type="nucleotide sequence ID" value="NM_001012065.1"/>
</dbReference>
<dbReference type="RefSeq" id="XP_017444608.1">
    <property type="nucleotide sequence ID" value="XM_017589119.3"/>
</dbReference>
<dbReference type="SMR" id="Q6AY19"/>
<dbReference type="FunCoup" id="Q6AY19">
    <property type="interactions" value="1071"/>
</dbReference>
<dbReference type="IntAct" id="Q6AY19">
    <property type="interactions" value="2"/>
</dbReference>
<dbReference type="STRING" id="10116.ENSRNOP00000028290"/>
<dbReference type="PhosphoSitePlus" id="Q6AY19"/>
<dbReference type="PaxDb" id="10116-ENSRNOP00000028290"/>
<dbReference type="Ensembl" id="ENSRNOT00000028290.7">
    <property type="protein sequence ID" value="ENSRNOP00000028290.6"/>
    <property type="gene ID" value="ENSRNOG00000020848.7"/>
</dbReference>
<dbReference type="GeneID" id="308453"/>
<dbReference type="KEGG" id="rno:308453"/>
<dbReference type="UCSC" id="RGD:1311356">
    <property type="organism name" value="rat"/>
</dbReference>
<dbReference type="AGR" id="RGD:1311356"/>
<dbReference type="CTD" id="79934"/>
<dbReference type="RGD" id="1311356">
    <property type="gene designation" value="Coq8b"/>
</dbReference>
<dbReference type="eggNOG" id="KOG1234">
    <property type="taxonomic scope" value="Eukaryota"/>
</dbReference>
<dbReference type="GeneTree" id="ENSGT00940000158965"/>
<dbReference type="HOGENOM" id="CLU_006533_9_0_1"/>
<dbReference type="InParanoid" id="Q6AY19"/>
<dbReference type="OMA" id="CRGYPES"/>
<dbReference type="OrthoDB" id="201153at2759"/>
<dbReference type="Reactome" id="R-RNO-2142789">
    <property type="pathway name" value="Ubiquinol biosynthesis"/>
</dbReference>
<dbReference type="UniPathway" id="UPA00232"/>
<dbReference type="PRO" id="PR:Q6AY19"/>
<dbReference type="Proteomes" id="UP000002494">
    <property type="component" value="Chromosome 1"/>
</dbReference>
<dbReference type="Bgee" id="ENSRNOG00000020848">
    <property type="expression patterns" value="Expressed in testis and 20 other cell types or tissues"/>
</dbReference>
<dbReference type="GO" id="GO:0005829">
    <property type="term" value="C:cytosol"/>
    <property type="evidence" value="ECO:0007669"/>
    <property type="project" value="UniProtKB-SubCell"/>
</dbReference>
<dbReference type="GO" id="GO:0031966">
    <property type="term" value="C:mitochondrial membrane"/>
    <property type="evidence" value="ECO:0007669"/>
    <property type="project" value="UniProtKB-SubCell"/>
</dbReference>
<dbReference type="GO" id="GO:0005739">
    <property type="term" value="C:mitochondrion"/>
    <property type="evidence" value="ECO:0000266"/>
    <property type="project" value="RGD"/>
</dbReference>
<dbReference type="GO" id="GO:0005886">
    <property type="term" value="C:plasma membrane"/>
    <property type="evidence" value="ECO:0007669"/>
    <property type="project" value="UniProtKB-SubCell"/>
</dbReference>
<dbReference type="GO" id="GO:0005524">
    <property type="term" value="F:ATP binding"/>
    <property type="evidence" value="ECO:0007669"/>
    <property type="project" value="UniProtKB-KW"/>
</dbReference>
<dbReference type="GO" id="GO:0004672">
    <property type="term" value="F:protein kinase activity"/>
    <property type="evidence" value="ECO:0000250"/>
    <property type="project" value="UniProtKB"/>
</dbReference>
<dbReference type="GO" id="GO:0021692">
    <property type="term" value="P:cerebellar Purkinje cell layer morphogenesis"/>
    <property type="evidence" value="ECO:0000250"/>
    <property type="project" value="UniProtKB"/>
</dbReference>
<dbReference type="GO" id="GO:0006744">
    <property type="term" value="P:ubiquinone biosynthetic process"/>
    <property type="evidence" value="ECO:0000250"/>
    <property type="project" value="UniProtKB"/>
</dbReference>
<dbReference type="CDD" id="cd13970">
    <property type="entry name" value="ABC1_ADCK3"/>
    <property type="match status" value="1"/>
</dbReference>
<dbReference type="InterPro" id="IPR004147">
    <property type="entry name" value="ABC1_dom"/>
</dbReference>
<dbReference type="InterPro" id="IPR034646">
    <property type="entry name" value="ADCK3_dom"/>
</dbReference>
<dbReference type="InterPro" id="IPR051409">
    <property type="entry name" value="Atypical_kinase_ADCK"/>
</dbReference>
<dbReference type="InterPro" id="IPR011009">
    <property type="entry name" value="Kinase-like_dom_sf"/>
</dbReference>
<dbReference type="PANTHER" id="PTHR43851">
    <property type="match status" value="1"/>
</dbReference>
<dbReference type="PANTHER" id="PTHR43851:SF4">
    <property type="entry name" value="ATYPICAL KINASE COQ8B, MITOCHONDRIAL"/>
    <property type="match status" value="1"/>
</dbReference>
<dbReference type="Pfam" id="PF03109">
    <property type="entry name" value="ABC1"/>
    <property type="match status" value="1"/>
</dbReference>
<dbReference type="SUPFAM" id="SSF56112">
    <property type="entry name" value="Protein kinase-like (PK-like)"/>
    <property type="match status" value="1"/>
</dbReference>
<sequence length="528" mass="58905">MWLELGAMLRTTCGPLGRAVRLPCAGALRLRPHWWGPCRDCLAQRVHQDQPGRGLTEDEIRRAREARLRKAPRPQLSDRSRERKVPASRISRLASFGGLAVGLGLGALAEVTKKSLPGGSLQHEGSSPFLTEANAERIVQTLCTVRGAALKIGQMLSIQDNSLISPQLQRVFERVRQSADFMPRWQMMKVLEEELGKDWQDKVASLEEVPFAAASIGQVHQGVLKDGTEVAVKIQYPGVAESIQSDVQNLLALLKMSVGLPEGLFAEQSLQTLQQELAWECDYRREAACAQTFKKLLADDPFFRVPAVVEELCTTRVLGMELAGGIPLDQCQGLSQDIRNQICFQLLRLCLRELFEFRFMQTDPNWANFLYDASSHKVTLLDFGASRAFGTEFTDHYIEVVKAAADGDRDRVLQKSQDLKFLTGFETKAFSDAHVEAVMILGEPFAASGSYDFGAGETARRIQGLIPVLLRHRLRPPPEETYALHRKLAGAFLACARLHAHIACRDLFQDTYHRYWASRQTLPLPAAS</sequence>
<keyword id="KW-0067">ATP-binding</keyword>
<keyword id="KW-1003">Cell membrane</keyword>
<keyword id="KW-0963">Cytoplasm</keyword>
<keyword id="KW-0418">Kinase</keyword>
<keyword id="KW-0472">Membrane</keyword>
<keyword id="KW-0496">Mitochondrion</keyword>
<keyword id="KW-0547">Nucleotide-binding</keyword>
<keyword id="KW-1185">Reference proteome</keyword>
<keyword id="KW-0808">Transferase</keyword>
<keyword id="KW-0812">Transmembrane</keyword>
<keyword id="KW-1133">Transmembrane helix</keyword>
<feature type="chain" id="PRO_0000271799" description="Atypical kinase COQ8B, mitochondrial">
    <location>
        <begin position="1"/>
        <end position="528"/>
    </location>
</feature>
<feature type="transmembrane region" description="Helical" evidence="3">
    <location>
        <begin position="93"/>
        <end position="109"/>
    </location>
</feature>
<feature type="domain" description="Protein kinase">
    <location>
        <begin position="187"/>
        <end position="419"/>
    </location>
</feature>
<feature type="short sequence motif" description="KxGQ motif" evidence="1">
    <location>
        <begin position="151"/>
        <end position="154"/>
    </location>
</feature>
<feature type="short sequence motif" description="AAAS motif" evidence="1">
    <location>
        <begin position="212"/>
        <end position="215"/>
    </location>
</feature>
<feature type="active site" description="Proton acceptor" evidence="1">
    <location>
        <position position="363"/>
    </location>
</feature>
<feature type="binding site" evidence="1">
    <location>
        <position position="215"/>
    </location>
    <ligand>
        <name>ATP</name>
        <dbReference type="ChEBI" id="CHEBI:30616"/>
    </ligand>
</feature>
<feature type="binding site" evidence="1">
    <location>
        <position position="233"/>
    </location>
    <ligand>
        <name>ATP</name>
        <dbReference type="ChEBI" id="CHEBI:30616"/>
    </ligand>
</feature>
<feature type="binding site" evidence="1">
    <location>
        <begin position="320"/>
        <end position="323"/>
    </location>
    <ligand>
        <name>ATP</name>
        <dbReference type="ChEBI" id="CHEBI:30616"/>
    </ligand>
</feature>
<feature type="binding site" evidence="1">
    <location>
        <position position="368"/>
    </location>
    <ligand>
        <name>ATP</name>
        <dbReference type="ChEBI" id="CHEBI:30616"/>
    </ligand>
</feature>
<feature type="binding site" evidence="1">
    <location>
        <position position="382"/>
    </location>
    <ligand>
        <name>ATP</name>
        <dbReference type="ChEBI" id="CHEBI:30616"/>
    </ligand>
</feature>
<organism>
    <name type="scientific">Rattus norvegicus</name>
    <name type="common">Rat</name>
    <dbReference type="NCBI Taxonomy" id="10116"/>
    <lineage>
        <taxon>Eukaryota</taxon>
        <taxon>Metazoa</taxon>
        <taxon>Chordata</taxon>
        <taxon>Craniata</taxon>
        <taxon>Vertebrata</taxon>
        <taxon>Euteleostomi</taxon>
        <taxon>Mammalia</taxon>
        <taxon>Eutheria</taxon>
        <taxon>Euarchontoglires</taxon>
        <taxon>Glires</taxon>
        <taxon>Rodentia</taxon>
        <taxon>Myomorpha</taxon>
        <taxon>Muroidea</taxon>
        <taxon>Muridae</taxon>
        <taxon>Murinae</taxon>
        <taxon>Rattus</taxon>
    </lineage>
</organism>
<protein>
    <recommendedName>
        <fullName evidence="5">Atypical kinase COQ8B, mitochondrial</fullName>
        <ecNumber evidence="1">2.7.-.-</ecNumber>
    </recommendedName>
    <alternativeName>
        <fullName evidence="6">AarF domain-containing protein kinase 4</fullName>
    </alternativeName>
    <alternativeName>
        <fullName evidence="2">Coenzyme Q protein 8B</fullName>
    </alternativeName>
</protein>
<gene>
    <name evidence="2" type="primary">Coq8b</name>
    <name evidence="6" type="synonym">Adck4</name>
</gene>